<sequence length="428" mass="46409">MLQPQIKLNAKNEIYVPGDKSISHRTVLFCALSQGKSEIHGFLEGEDPLHTLRCFESMGLSVSSLGKGSYSVVSPGKQNLNSPKGVLDFGNAGTGIRLSAGLLAGLPGMNATLTGDASLCKRPMARIMNPLQEMGASVISVEGNDRAPLRIEGKQLKDYSYVSPIASAQIKSALVLAALASDISIEYKESEVSRDHTENMIRFLGGTITHHSSVHFTVKPPYHFEGTKYVIPGDISSAAFFIVFGLCVGGSEPLLIKNIGLNPSRIGILTVLQNMGGKIEIIAKRVECGEEIGDLLVYPSKLKRTVITEDLIPSIIDEIPILTIAGLFSEGGFQISHAEELRAKESDRIRSMVSNLERLGVKVKEVNDGYEFDEVGTIQNAKIETFMDHRIAMSFAILSKLSGVSLSFDDTSWVDTSFPGFFEILKSV</sequence>
<evidence type="ECO:0000255" key="1">
    <source>
        <dbReference type="HAMAP-Rule" id="MF_00210"/>
    </source>
</evidence>
<reference key="1">
    <citation type="journal article" date="2008" name="PLoS ONE">
        <title>Genome sequence of the saprophyte Leptospira biflexa provides insights into the evolution of Leptospira and the pathogenesis of leptospirosis.</title>
        <authorList>
            <person name="Picardeau M."/>
            <person name="Bulach D.M."/>
            <person name="Bouchier C."/>
            <person name="Zuerner R.L."/>
            <person name="Zidane N."/>
            <person name="Wilson P.J."/>
            <person name="Creno S."/>
            <person name="Kuczek E.S."/>
            <person name="Bommezzadri S."/>
            <person name="Davis J.C."/>
            <person name="McGrath A."/>
            <person name="Johnson M.J."/>
            <person name="Boursaux-Eude C."/>
            <person name="Seemann T."/>
            <person name="Rouy Z."/>
            <person name="Coppel R.L."/>
            <person name="Rood J.I."/>
            <person name="Lajus A."/>
            <person name="Davies J.K."/>
            <person name="Medigue C."/>
            <person name="Adler B."/>
        </authorList>
    </citation>
    <scope>NUCLEOTIDE SEQUENCE [LARGE SCALE GENOMIC DNA]</scope>
    <source>
        <strain>Patoc 1 / ATCC 23582 / Paris</strain>
    </source>
</reference>
<keyword id="KW-0028">Amino-acid biosynthesis</keyword>
<keyword id="KW-0057">Aromatic amino acid biosynthesis</keyword>
<keyword id="KW-0963">Cytoplasm</keyword>
<keyword id="KW-1185">Reference proteome</keyword>
<keyword id="KW-0808">Transferase</keyword>
<gene>
    <name evidence="1" type="primary">aroA</name>
    <name type="ordered locus">LEPBI_I2598</name>
</gene>
<name>AROA_LEPBP</name>
<organism>
    <name type="scientific">Leptospira biflexa serovar Patoc (strain Patoc 1 / ATCC 23582 / Paris)</name>
    <dbReference type="NCBI Taxonomy" id="456481"/>
    <lineage>
        <taxon>Bacteria</taxon>
        <taxon>Pseudomonadati</taxon>
        <taxon>Spirochaetota</taxon>
        <taxon>Spirochaetia</taxon>
        <taxon>Leptospirales</taxon>
        <taxon>Leptospiraceae</taxon>
        <taxon>Leptospira</taxon>
    </lineage>
</organism>
<dbReference type="EC" id="2.5.1.19" evidence="1"/>
<dbReference type="EMBL" id="CP000786">
    <property type="protein sequence ID" value="ABZ98677.1"/>
    <property type="molecule type" value="Genomic_DNA"/>
</dbReference>
<dbReference type="RefSeq" id="WP_012389537.1">
    <property type="nucleotide sequence ID" value="NC_010602.1"/>
</dbReference>
<dbReference type="SMR" id="B0SM47"/>
<dbReference type="STRING" id="456481.LEPBI_I2598"/>
<dbReference type="KEGG" id="lbi:LEPBI_I2598"/>
<dbReference type="HOGENOM" id="CLU_024321_0_1_12"/>
<dbReference type="OrthoDB" id="9809920at2"/>
<dbReference type="BioCyc" id="LBIF456481:LEPBI_RS12780-MONOMER"/>
<dbReference type="UniPathway" id="UPA00053">
    <property type="reaction ID" value="UER00089"/>
</dbReference>
<dbReference type="Proteomes" id="UP000001847">
    <property type="component" value="Chromosome I"/>
</dbReference>
<dbReference type="GO" id="GO:0005737">
    <property type="term" value="C:cytoplasm"/>
    <property type="evidence" value="ECO:0007669"/>
    <property type="project" value="UniProtKB-SubCell"/>
</dbReference>
<dbReference type="GO" id="GO:0003866">
    <property type="term" value="F:3-phosphoshikimate 1-carboxyvinyltransferase activity"/>
    <property type="evidence" value="ECO:0007669"/>
    <property type="project" value="UniProtKB-UniRule"/>
</dbReference>
<dbReference type="GO" id="GO:0008652">
    <property type="term" value="P:amino acid biosynthetic process"/>
    <property type="evidence" value="ECO:0007669"/>
    <property type="project" value="UniProtKB-KW"/>
</dbReference>
<dbReference type="GO" id="GO:0009073">
    <property type="term" value="P:aromatic amino acid family biosynthetic process"/>
    <property type="evidence" value="ECO:0007669"/>
    <property type="project" value="UniProtKB-KW"/>
</dbReference>
<dbReference type="GO" id="GO:0009423">
    <property type="term" value="P:chorismate biosynthetic process"/>
    <property type="evidence" value="ECO:0007669"/>
    <property type="project" value="UniProtKB-UniRule"/>
</dbReference>
<dbReference type="CDD" id="cd01556">
    <property type="entry name" value="EPSP_synthase"/>
    <property type="match status" value="1"/>
</dbReference>
<dbReference type="FunFam" id="3.65.10.10:FF:000005">
    <property type="entry name" value="3-phosphoshikimate 1-carboxyvinyltransferase"/>
    <property type="match status" value="1"/>
</dbReference>
<dbReference type="Gene3D" id="3.65.10.10">
    <property type="entry name" value="Enolpyruvate transferase domain"/>
    <property type="match status" value="2"/>
</dbReference>
<dbReference type="HAMAP" id="MF_00210">
    <property type="entry name" value="EPSP_synth"/>
    <property type="match status" value="1"/>
</dbReference>
<dbReference type="InterPro" id="IPR001986">
    <property type="entry name" value="Enolpyruvate_Tfrase_dom"/>
</dbReference>
<dbReference type="InterPro" id="IPR036968">
    <property type="entry name" value="Enolpyruvate_Tfrase_sf"/>
</dbReference>
<dbReference type="InterPro" id="IPR006264">
    <property type="entry name" value="EPSP_synthase"/>
</dbReference>
<dbReference type="InterPro" id="IPR023193">
    <property type="entry name" value="EPSP_synthase_CS"/>
</dbReference>
<dbReference type="InterPro" id="IPR013792">
    <property type="entry name" value="RNA3'P_cycl/enolpyr_Trfase_a/b"/>
</dbReference>
<dbReference type="NCBIfam" id="TIGR01356">
    <property type="entry name" value="aroA"/>
    <property type="match status" value="1"/>
</dbReference>
<dbReference type="PANTHER" id="PTHR21090">
    <property type="entry name" value="AROM/DEHYDROQUINATE SYNTHASE"/>
    <property type="match status" value="1"/>
</dbReference>
<dbReference type="PANTHER" id="PTHR21090:SF5">
    <property type="entry name" value="PENTAFUNCTIONAL AROM POLYPEPTIDE"/>
    <property type="match status" value="1"/>
</dbReference>
<dbReference type="Pfam" id="PF00275">
    <property type="entry name" value="EPSP_synthase"/>
    <property type="match status" value="1"/>
</dbReference>
<dbReference type="PIRSF" id="PIRSF000505">
    <property type="entry name" value="EPSPS"/>
    <property type="match status" value="1"/>
</dbReference>
<dbReference type="SUPFAM" id="SSF55205">
    <property type="entry name" value="EPT/RTPC-like"/>
    <property type="match status" value="1"/>
</dbReference>
<dbReference type="PROSITE" id="PS00885">
    <property type="entry name" value="EPSP_SYNTHASE_2"/>
    <property type="match status" value="1"/>
</dbReference>
<comment type="function">
    <text evidence="1">Catalyzes the transfer of the enolpyruvyl moiety of phosphoenolpyruvate (PEP) to the 5-hydroxyl of shikimate-3-phosphate (S3P) to produce enolpyruvyl shikimate-3-phosphate and inorganic phosphate.</text>
</comment>
<comment type="catalytic activity">
    <reaction evidence="1">
        <text>3-phosphoshikimate + phosphoenolpyruvate = 5-O-(1-carboxyvinyl)-3-phosphoshikimate + phosphate</text>
        <dbReference type="Rhea" id="RHEA:21256"/>
        <dbReference type="ChEBI" id="CHEBI:43474"/>
        <dbReference type="ChEBI" id="CHEBI:57701"/>
        <dbReference type="ChEBI" id="CHEBI:58702"/>
        <dbReference type="ChEBI" id="CHEBI:145989"/>
        <dbReference type="EC" id="2.5.1.19"/>
    </reaction>
    <physiologicalReaction direction="left-to-right" evidence="1">
        <dbReference type="Rhea" id="RHEA:21257"/>
    </physiologicalReaction>
</comment>
<comment type="pathway">
    <text evidence="1">Metabolic intermediate biosynthesis; chorismate biosynthesis; chorismate from D-erythrose 4-phosphate and phosphoenolpyruvate: step 6/7.</text>
</comment>
<comment type="subunit">
    <text evidence="1">Monomer.</text>
</comment>
<comment type="subcellular location">
    <subcellularLocation>
        <location evidence="1">Cytoplasm</location>
    </subcellularLocation>
</comment>
<comment type="similarity">
    <text evidence="1">Belongs to the EPSP synthase family.</text>
</comment>
<accession>B0SM47</accession>
<feature type="chain" id="PRO_1000099714" description="3-phosphoshikimate 1-carboxyvinyltransferase">
    <location>
        <begin position="1"/>
        <end position="428"/>
    </location>
</feature>
<feature type="active site" description="Proton acceptor" evidence="1">
    <location>
        <position position="317"/>
    </location>
</feature>
<feature type="binding site" evidence="1">
    <location>
        <position position="20"/>
    </location>
    <ligand>
        <name>3-phosphoshikimate</name>
        <dbReference type="ChEBI" id="CHEBI:145989"/>
    </ligand>
</feature>
<feature type="binding site" evidence="1">
    <location>
        <position position="20"/>
    </location>
    <ligand>
        <name>phosphoenolpyruvate</name>
        <dbReference type="ChEBI" id="CHEBI:58702"/>
    </ligand>
</feature>
<feature type="binding site" evidence="1">
    <location>
        <position position="21"/>
    </location>
    <ligand>
        <name>3-phosphoshikimate</name>
        <dbReference type="ChEBI" id="CHEBI:145989"/>
    </ligand>
</feature>
<feature type="binding site" evidence="1">
    <location>
        <position position="25"/>
    </location>
    <ligand>
        <name>3-phosphoshikimate</name>
        <dbReference type="ChEBI" id="CHEBI:145989"/>
    </ligand>
</feature>
<feature type="binding site" evidence="1">
    <location>
        <position position="93"/>
    </location>
    <ligand>
        <name>phosphoenolpyruvate</name>
        <dbReference type="ChEBI" id="CHEBI:58702"/>
    </ligand>
</feature>
<feature type="binding site" evidence="1">
    <location>
        <position position="122"/>
    </location>
    <ligand>
        <name>phosphoenolpyruvate</name>
        <dbReference type="ChEBI" id="CHEBI:58702"/>
    </ligand>
</feature>
<feature type="binding site" evidence="1">
    <location>
        <position position="167"/>
    </location>
    <ligand>
        <name>3-phosphoshikimate</name>
        <dbReference type="ChEBI" id="CHEBI:145989"/>
    </ligand>
</feature>
<feature type="binding site" evidence="1">
    <location>
        <position position="169"/>
    </location>
    <ligand>
        <name>3-phosphoshikimate</name>
        <dbReference type="ChEBI" id="CHEBI:145989"/>
    </ligand>
</feature>
<feature type="binding site" evidence="1">
    <location>
        <position position="169"/>
    </location>
    <ligand>
        <name>phosphoenolpyruvate</name>
        <dbReference type="ChEBI" id="CHEBI:58702"/>
    </ligand>
</feature>
<feature type="binding site" evidence="1">
    <location>
        <position position="317"/>
    </location>
    <ligand>
        <name>3-phosphoshikimate</name>
        <dbReference type="ChEBI" id="CHEBI:145989"/>
    </ligand>
</feature>
<feature type="binding site" evidence="1">
    <location>
        <position position="344"/>
    </location>
    <ligand>
        <name>3-phosphoshikimate</name>
        <dbReference type="ChEBI" id="CHEBI:145989"/>
    </ligand>
</feature>
<feature type="binding site" evidence="1">
    <location>
        <position position="348"/>
    </location>
    <ligand>
        <name>phosphoenolpyruvate</name>
        <dbReference type="ChEBI" id="CHEBI:58702"/>
    </ligand>
</feature>
<feature type="binding site" evidence="1">
    <location>
        <position position="390"/>
    </location>
    <ligand>
        <name>phosphoenolpyruvate</name>
        <dbReference type="ChEBI" id="CHEBI:58702"/>
    </ligand>
</feature>
<proteinExistence type="inferred from homology"/>
<protein>
    <recommendedName>
        <fullName evidence="1">3-phosphoshikimate 1-carboxyvinyltransferase</fullName>
        <ecNumber evidence="1">2.5.1.19</ecNumber>
    </recommendedName>
    <alternativeName>
        <fullName evidence="1">5-enolpyruvylshikimate-3-phosphate synthase</fullName>
        <shortName evidence="1">EPSP synthase</shortName>
        <shortName evidence="1">EPSPS</shortName>
    </alternativeName>
</protein>